<accession>B9MJZ1</accession>
<proteinExistence type="inferred from homology"/>
<dbReference type="EMBL" id="CP001393">
    <property type="protein sequence ID" value="ACM60649.1"/>
    <property type="molecule type" value="Genomic_DNA"/>
</dbReference>
<dbReference type="RefSeq" id="WP_015907996.1">
    <property type="nucleotide sequence ID" value="NC_012034.1"/>
</dbReference>
<dbReference type="SMR" id="B9MJZ1"/>
<dbReference type="STRING" id="521460.Athe_1551"/>
<dbReference type="GeneID" id="31772904"/>
<dbReference type="KEGG" id="ate:Athe_1551"/>
<dbReference type="eggNOG" id="COG0443">
    <property type="taxonomic scope" value="Bacteria"/>
</dbReference>
<dbReference type="HOGENOM" id="CLU_005965_2_1_9"/>
<dbReference type="Proteomes" id="UP000007723">
    <property type="component" value="Chromosome"/>
</dbReference>
<dbReference type="GO" id="GO:0005524">
    <property type="term" value="F:ATP binding"/>
    <property type="evidence" value="ECO:0007669"/>
    <property type="project" value="UniProtKB-UniRule"/>
</dbReference>
<dbReference type="GO" id="GO:0140662">
    <property type="term" value="F:ATP-dependent protein folding chaperone"/>
    <property type="evidence" value="ECO:0007669"/>
    <property type="project" value="InterPro"/>
</dbReference>
<dbReference type="GO" id="GO:0051082">
    <property type="term" value="F:unfolded protein binding"/>
    <property type="evidence" value="ECO:0007669"/>
    <property type="project" value="InterPro"/>
</dbReference>
<dbReference type="CDD" id="cd10234">
    <property type="entry name" value="ASKHA_NBD_HSP70_DnaK-like"/>
    <property type="match status" value="1"/>
</dbReference>
<dbReference type="FunFam" id="2.60.34.10:FF:000014">
    <property type="entry name" value="Chaperone protein DnaK HSP70"/>
    <property type="match status" value="1"/>
</dbReference>
<dbReference type="FunFam" id="1.20.1270.10:FF:000001">
    <property type="entry name" value="Molecular chaperone DnaK"/>
    <property type="match status" value="1"/>
</dbReference>
<dbReference type="FunFam" id="3.30.420.40:FF:000071">
    <property type="entry name" value="Molecular chaperone DnaK"/>
    <property type="match status" value="1"/>
</dbReference>
<dbReference type="FunFam" id="3.90.640.10:FF:000003">
    <property type="entry name" value="Molecular chaperone DnaK"/>
    <property type="match status" value="1"/>
</dbReference>
<dbReference type="Gene3D" id="1.20.1270.10">
    <property type="match status" value="1"/>
</dbReference>
<dbReference type="Gene3D" id="3.30.420.40">
    <property type="match status" value="2"/>
</dbReference>
<dbReference type="Gene3D" id="3.90.640.10">
    <property type="entry name" value="Actin, Chain A, domain 4"/>
    <property type="match status" value="1"/>
</dbReference>
<dbReference type="Gene3D" id="2.60.34.10">
    <property type="entry name" value="Substrate Binding Domain Of DNAk, Chain A, domain 1"/>
    <property type="match status" value="1"/>
</dbReference>
<dbReference type="HAMAP" id="MF_00332">
    <property type="entry name" value="DnaK"/>
    <property type="match status" value="1"/>
</dbReference>
<dbReference type="InterPro" id="IPR043129">
    <property type="entry name" value="ATPase_NBD"/>
</dbReference>
<dbReference type="InterPro" id="IPR012725">
    <property type="entry name" value="Chaperone_DnaK"/>
</dbReference>
<dbReference type="InterPro" id="IPR018181">
    <property type="entry name" value="Heat_shock_70_CS"/>
</dbReference>
<dbReference type="InterPro" id="IPR029048">
    <property type="entry name" value="HSP70_C_sf"/>
</dbReference>
<dbReference type="InterPro" id="IPR029047">
    <property type="entry name" value="HSP70_peptide-bd_sf"/>
</dbReference>
<dbReference type="InterPro" id="IPR013126">
    <property type="entry name" value="Hsp_70_fam"/>
</dbReference>
<dbReference type="NCBIfam" id="NF001413">
    <property type="entry name" value="PRK00290.1"/>
    <property type="match status" value="1"/>
</dbReference>
<dbReference type="NCBIfam" id="TIGR02350">
    <property type="entry name" value="prok_dnaK"/>
    <property type="match status" value="1"/>
</dbReference>
<dbReference type="PANTHER" id="PTHR19375">
    <property type="entry name" value="HEAT SHOCK PROTEIN 70KDA"/>
    <property type="match status" value="1"/>
</dbReference>
<dbReference type="Pfam" id="PF00012">
    <property type="entry name" value="HSP70"/>
    <property type="match status" value="1"/>
</dbReference>
<dbReference type="PRINTS" id="PR00301">
    <property type="entry name" value="HEATSHOCK70"/>
</dbReference>
<dbReference type="SUPFAM" id="SSF53067">
    <property type="entry name" value="Actin-like ATPase domain"/>
    <property type="match status" value="2"/>
</dbReference>
<dbReference type="SUPFAM" id="SSF100934">
    <property type="entry name" value="Heat shock protein 70kD (HSP70), C-terminal subdomain"/>
    <property type="match status" value="1"/>
</dbReference>
<dbReference type="SUPFAM" id="SSF100920">
    <property type="entry name" value="Heat shock protein 70kD (HSP70), peptide-binding domain"/>
    <property type="match status" value="1"/>
</dbReference>
<dbReference type="PROSITE" id="PS00297">
    <property type="entry name" value="HSP70_1"/>
    <property type="match status" value="1"/>
</dbReference>
<dbReference type="PROSITE" id="PS00329">
    <property type="entry name" value="HSP70_2"/>
    <property type="match status" value="1"/>
</dbReference>
<dbReference type="PROSITE" id="PS01036">
    <property type="entry name" value="HSP70_3"/>
    <property type="match status" value="1"/>
</dbReference>
<reference key="1">
    <citation type="submission" date="2009-01" db="EMBL/GenBank/DDBJ databases">
        <title>Complete sequence of chromosome of Caldicellulosiruptor becscii DSM 6725.</title>
        <authorList>
            <person name="Lucas S."/>
            <person name="Copeland A."/>
            <person name="Lapidus A."/>
            <person name="Glavina del Rio T."/>
            <person name="Tice H."/>
            <person name="Bruce D."/>
            <person name="Goodwin L."/>
            <person name="Pitluck S."/>
            <person name="Sims D."/>
            <person name="Meincke L."/>
            <person name="Brettin T."/>
            <person name="Detter J.C."/>
            <person name="Han C."/>
            <person name="Larimer F."/>
            <person name="Land M."/>
            <person name="Hauser L."/>
            <person name="Kyrpides N."/>
            <person name="Ovchinnikova G."/>
            <person name="Kataeva I."/>
            <person name="Adams M.W.W."/>
        </authorList>
    </citation>
    <scope>NUCLEOTIDE SEQUENCE [LARGE SCALE GENOMIC DNA]</scope>
    <source>
        <strain>ATCC BAA-1888 / DSM 6725 / KCTC 15123 / Z-1320</strain>
    </source>
</reference>
<feature type="chain" id="PRO_1000133126" description="Chaperone protein DnaK">
    <location>
        <begin position="1"/>
        <end position="607"/>
    </location>
</feature>
<feature type="region of interest" description="Disordered" evidence="2">
    <location>
        <begin position="577"/>
        <end position="607"/>
    </location>
</feature>
<feature type="compositionally biased region" description="Gly residues" evidence="2">
    <location>
        <begin position="583"/>
        <end position="595"/>
    </location>
</feature>
<feature type="modified residue" description="Phosphothreonine; by autocatalysis" evidence="1">
    <location>
        <position position="174"/>
    </location>
</feature>
<evidence type="ECO:0000255" key="1">
    <source>
        <dbReference type="HAMAP-Rule" id="MF_00332"/>
    </source>
</evidence>
<evidence type="ECO:0000256" key="2">
    <source>
        <dbReference type="SAM" id="MobiDB-lite"/>
    </source>
</evidence>
<sequence length="607" mass="66547">MAHILGIDLGTTNSCMAVIEGGQPVVIPNAEGFRTTPSVVAFTKTGERLVGHAAKRQAITNPERTIISIKRDMGTNKRIKIDDKEYSPEEISAMILMKLKADAEAYLGEKITQAVITVPAYFTDSQRQATKNAGRIAGLEVLRIINEPTAAALAYGLDKEGHQKIMVYDLGGGTFDVSILEIGDGVIEVLATSGNNRLGGDDFDQRIIDYIADEFMKEHGIDLRQDKVALQRLKDAAERAKIELSSALQTTINLPFITADANGPKHIDMVLTRAKFEELIKDLVEKTREPVETALSDAKLTPEQIDKVILVGGSTRIPYVQEFVKKLTGKEPFKGINPDECVAIGAAIQAGVLAGQVKDILLLDVTPLSLGIETLGGVFTKIIERNTTIPTRKSQIFTTAVDGQTQVEIHVLQGERPLAKDNKTLGRFILDGIPPAPRGVPQIEVTFDIDANGIVHVSAKDLGTGREQKITITSQTHLSEEEIQRAIKEAEMYAEQDRKRKELIEARNRADSIIYQTEKLLRELGDKMTETEKQQIESKLKALKDVMNGEDKEQIERAIDELTKSFYDVSTRLYQQGYTASGPQGGPNPGGGQSGPDGNVNTDYKVY</sequence>
<protein>
    <recommendedName>
        <fullName evidence="1">Chaperone protein DnaK</fullName>
    </recommendedName>
    <alternativeName>
        <fullName evidence="1">HSP70</fullName>
    </alternativeName>
    <alternativeName>
        <fullName evidence="1">Heat shock 70 kDa protein</fullName>
    </alternativeName>
    <alternativeName>
        <fullName evidence="1">Heat shock protein 70</fullName>
    </alternativeName>
</protein>
<organism>
    <name type="scientific">Caldicellulosiruptor bescii (strain ATCC BAA-1888 / DSM 6725 / KCTC 15123 / Z-1320)</name>
    <name type="common">Anaerocellum thermophilum</name>
    <dbReference type="NCBI Taxonomy" id="521460"/>
    <lineage>
        <taxon>Bacteria</taxon>
        <taxon>Bacillati</taxon>
        <taxon>Bacillota</taxon>
        <taxon>Bacillota incertae sedis</taxon>
        <taxon>Caldicellulosiruptorales</taxon>
        <taxon>Caldicellulosiruptoraceae</taxon>
        <taxon>Caldicellulosiruptor</taxon>
    </lineage>
</organism>
<keyword id="KW-0067">ATP-binding</keyword>
<keyword id="KW-0143">Chaperone</keyword>
<keyword id="KW-0547">Nucleotide-binding</keyword>
<keyword id="KW-0597">Phosphoprotein</keyword>
<keyword id="KW-0346">Stress response</keyword>
<name>DNAK_CALBD</name>
<comment type="function">
    <text evidence="1">Acts as a chaperone.</text>
</comment>
<comment type="induction">
    <text evidence="1">By stress conditions e.g. heat shock.</text>
</comment>
<comment type="similarity">
    <text evidence="1">Belongs to the heat shock protein 70 family.</text>
</comment>
<gene>
    <name evidence="1" type="primary">dnaK</name>
    <name type="ordered locus">Athe_1551</name>
</gene>